<evidence type="ECO:0000255" key="1">
    <source>
        <dbReference type="HAMAP-Rule" id="MF_00542"/>
    </source>
</evidence>
<comment type="catalytic activity">
    <reaction evidence="1">
        <text>butanoate + ATP = butanoyl phosphate + ADP</text>
        <dbReference type="Rhea" id="RHEA:13585"/>
        <dbReference type="ChEBI" id="CHEBI:17968"/>
        <dbReference type="ChEBI" id="CHEBI:30616"/>
        <dbReference type="ChEBI" id="CHEBI:58079"/>
        <dbReference type="ChEBI" id="CHEBI:456216"/>
        <dbReference type="EC" id="2.7.2.7"/>
    </reaction>
</comment>
<comment type="subcellular location">
    <subcellularLocation>
        <location evidence="1">Cytoplasm</location>
    </subcellularLocation>
</comment>
<comment type="similarity">
    <text evidence="1">Belongs to the acetokinase family.</text>
</comment>
<sequence length="355" mass="38587">MSYKLLIINPGSTSTKIGVYENEKELFEETLRHTNEEIKRYETIYDQFQFRKDVILNILKEKNFDITTLSAIVGRGGMLKPVEGGTYAVNDAMIEDLKVGVQGPHASNLGGIIAKSIGDELNIPSFIVDPVVTDELDDVARLSGVPELPRKSKFHALNQKAVAKRYGKDSGKGYENLNLIVVHMGGGVSVGAHKHGKVVDVNNALDGDGPFSPERAGTVPVGDLIKMCFSGQYTESEVYTKIVGKGGFVGYLNTNDVKGVIDKMEAGDKECEKIYKAFLYQITKTIGEMAAALNGKVDQILLTGGIAYSPTLVPDLKSNVEWIAPVTVYPGEDELLALAQGAIRVLDGEEKAKIY</sequence>
<gene>
    <name evidence="1" type="primary">buk</name>
    <name type="ordered locus">CLH_0297</name>
</gene>
<reference key="1">
    <citation type="submission" date="2008-05" db="EMBL/GenBank/DDBJ databases">
        <title>Complete genome sequence of Clostridium botulinum E3 str. Alaska E43.</title>
        <authorList>
            <person name="Brinkac L.M."/>
            <person name="Brown J.L."/>
            <person name="Bruce D."/>
            <person name="Detter C."/>
            <person name="Munk C."/>
            <person name="Smith L.A."/>
            <person name="Smith T.J."/>
            <person name="Sutton G."/>
            <person name="Brettin T.S."/>
        </authorList>
    </citation>
    <scope>NUCLEOTIDE SEQUENCE [LARGE SCALE GENOMIC DNA]</scope>
    <source>
        <strain>Alaska E43 / Type E3</strain>
    </source>
</reference>
<proteinExistence type="inferred from homology"/>
<name>BUK_CLOBA</name>
<dbReference type="EC" id="2.7.2.7" evidence="1"/>
<dbReference type="EMBL" id="CP001078">
    <property type="protein sequence ID" value="ACD52776.1"/>
    <property type="molecule type" value="Genomic_DNA"/>
</dbReference>
<dbReference type="RefSeq" id="WP_012450845.1">
    <property type="nucleotide sequence ID" value="NC_010723.1"/>
</dbReference>
<dbReference type="SMR" id="B2UYH0"/>
<dbReference type="KEGG" id="cbt:CLH_0297"/>
<dbReference type="HOGENOM" id="CLU_048716_0_0_9"/>
<dbReference type="GO" id="GO:0005737">
    <property type="term" value="C:cytoplasm"/>
    <property type="evidence" value="ECO:0007669"/>
    <property type="project" value="UniProtKB-SubCell"/>
</dbReference>
<dbReference type="GO" id="GO:0008776">
    <property type="term" value="F:acetate kinase activity"/>
    <property type="evidence" value="ECO:0007669"/>
    <property type="project" value="TreeGrafter"/>
</dbReference>
<dbReference type="GO" id="GO:0005524">
    <property type="term" value="F:ATP binding"/>
    <property type="evidence" value="ECO:0007669"/>
    <property type="project" value="UniProtKB-KW"/>
</dbReference>
<dbReference type="GO" id="GO:0047761">
    <property type="term" value="F:butyrate kinase activity"/>
    <property type="evidence" value="ECO:0007669"/>
    <property type="project" value="UniProtKB-UniRule"/>
</dbReference>
<dbReference type="GO" id="GO:0006083">
    <property type="term" value="P:acetate metabolic process"/>
    <property type="evidence" value="ECO:0007669"/>
    <property type="project" value="TreeGrafter"/>
</dbReference>
<dbReference type="CDD" id="cd24011">
    <property type="entry name" value="ASKHA_NBD_BK"/>
    <property type="match status" value="1"/>
</dbReference>
<dbReference type="Gene3D" id="3.30.420.40">
    <property type="match status" value="2"/>
</dbReference>
<dbReference type="HAMAP" id="MF_00542">
    <property type="entry name" value="Butyrate_kinase"/>
    <property type="match status" value="1"/>
</dbReference>
<dbReference type="InterPro" id="IPR000890">
    <property type="entry name" value="Aliphatic_acid_kin_short-chain"/>
</dbReference>
<dbReference type="InterPro" id="IPR023865">
    <property type="entry name" value="Aliphatic_acid_kinase_CS"/>
</dbReference>
<dbReference type="InterPro" id="IPR043129">
    <property type="entry name" value="ATPase_NBD"/>
</dbReference>
<dbReference type="InterPro" id="IPR011245">
    <property type="entry name" value="Butyrate_kin"/>
</dbReference>
<dbReference type="NCBIfam" id="TIGR02707">
    <property type="entry name" value="butyr_kinase"/>
    <property type="match status" value="1"/>
</dbReference>
<dbReference type="NCBIfam" id="NF002834">
    <property type="entry name" value="PRK03011.1-5"/>
    <property type="match status" value="1"/>
</dbReference>
<dbReference type="PANTHER" id="PTHR21060">
    <property type="entry name" value="ACETATE KINASE"/>
    <property type="match status" value="1"/>
</dbReference>
<dbReference type="PANTHER" id="PTHR21060:SF3">
    <property type="entry name" value="BUTYRATE KINASE 2-RELATED"/>
    <property type="match status" value="1"/>
</dbReference>
<dbReference type="Pfam" id="PF00871">
    <property type="entry name" value="Acetate_kinase"/>
    <property type="match status" value="1"/>
</dbReference>
<dbReference type="PIRSF" id="PIRSF036458">
    <property type="entry name" value="Butyrate_kin"/>
    <property type="match status" value="1"/>
</dbReference>
<dbReference type="PRINTS" id="PR00471">
    <property type="entry name" value="ACETATEKNASE"/>
</dbReference>
<dbReference type="SUPFAM" id="SSF53067">
    <property type="entry name" value="Actin-like ATPase domain"/>
    <property type="match status" value="2"/>
</dbReference>
<dbReference type="PROSITE" id="PS01075">
    <property type="entry name" value="ACETATE_KINASE_1"/>
    <property type="match status" value="1"/>
</dbReference>
<dbReference type="PROSITE" id="PS01076">
    <property type="entry name" value="ACETATE_KINASE_2"/>
    <property type="match status" value="1"/>
</dbReference>
<feature type="chain" id="PRO_1000128902" description="Probable butyrate kinase">
    <location>
        <begin position="1"/>
        <end position="355"/>
    </location>
</feature>
<keyword id="KW-0067">ATP-binding</keyword>
<keyword id="KW-0963">Cytoplasm</keyword>
<keyword id="KW-0418">Kinase</keyword>
<keyword id="KW-0547">Nucleotide-binding</keyword>
<keyword id="KW-0808">Transferase</keyword>
<protein>
    <recommendedName>
        <fullName evidence="1">Probable butyrate kinase</fullName>
        <shortName evidence="1">BK</shortName>
        <ecNumber evidence="1">2.7.2.7</ecNumber>
    </recommendedName>
    <alternativeName>
        <fullName evidence="1">Branched-chain carboxylic acid kinase</fullName>
    </alternativeName>
</protein>
<accession>B2UYH0</accession>
<organism>
    <name type="scientific">Clostridium botulinum (strain Alaska E43 / Type E3)</name>
    <dbReference type="NCBI Taxonomy" id="508767"/>
    <lineage>
        <taxon>Bacteria</taxon>
        <taxon>Bacillati</taxon>
        <taxon>Bacillota</taxon>
        <taxon>Clostridia</taxon>
        <taxon>Eubacteriales</taxon>
        <taxon>Clostridiaceae</taxon>
        <taxon>Clostridium</taxon>
    </lineage>
</organism>